<protein>
    <recommendedName>
        <fullName>Probable Hsp20 family chaperone</fullName>
    </recommendedName>
</protein>
<name>HSP16_ONYPE</name>
<feature type="chain" id="PRO_0000126053" description="Probable Hsp20 family chaperone">
    <location>
        <begin position="1"/>
        <end position="137"/>
    </location>
</feature>
<feature type="domain" description="sHSP" evidence="1">
    <location>
        <begin position="25"/>
        <end position="137"/>
    </location>
</feature>
<feature type="sequence conflict" description="In Ref. 2; AA sequence." evidence="2" ref="2">
    <original>T</original>
    <variation>L</variation>
    <location>
        <position position="26"/>
    </location>
</feature>
<reference key="1">
    <citation type="journal article" date="2004" name="Nat. Genet.">
        <title>Reductive evolution suggested from the complete genome sequence of a plant-pathogenic phytoplasma.</title>
        <authorList>
            <person name="Oshima K."/>
            <person name="Kakizawa S."/>
            <person name="Nishigawa H."/>
            <person name="Jung H.-Y."/>
            <person name="Wei W."/>
            <person name="Suzuki S."/>
            <person name="Arashida R."/>
            <person name="Nakata D."/>
            <person name="Miyata S."/>
            <person name="Ugaki M."/>
            <person name="Namba S."/>
        </authorList>
    </citation>
    <scope>NUCLEOTIDE SEQUENCE [LARGE SCALE GENOMIC DNA]</scope>
    <source>
        <strain>OY-M</strain>
    </source>
</reference>
<reference key="2">
    <citation type="submission" date="1999-07" db="UniProtKB">
        <title>Analysis of phytoplasmal proteins isolated by two dimensional gel electrophoresis.</title>
        <authorList>
            <person name="Zhon B."/>
            <person name="Tanaka M."/>
            <person name="Matsuda I."/>
        </authorList>
    </citation>
    <scope>PROTEIN SEQUENCE OF 1-26</scope>
    <source>
        <strain>OY-W</strain>
    </source>
</reference>
<gene>
    <name type="ordered locus">PAM_028</name>
</gene>
<organism>
    <name type="scientific">Onion yellows phytoplasma (strain OY-M)</name>
    <dbReference type="NCBI Taxonomy" id="262768"/>
    <lineage>
        <taxon>Bacteria</taxon>
        <taxon>Bacillati</taxon>
        <taxon>Mycoplasmatota</taxon>
        <taxon>Mollicutes</taxon>
        <taxon>Acholeplasmatales</taxon>
        <taxon>Acholeplasmataceae</taxon>
        <taxon>Candidatus Phytoplasma</taxon>
        <taxon>16SrI (Aster yellows group)</taxon>
    </lineage>
</organism>
<proteinExistence type="evidence at protein level"/>
<keyword id="KW-0143">Chaperone</keyword>
<keyword id="KW-0903">Direct protein sequencing</keyword>
<sequence>MLFSLINQNQDLLENLFEDFKTNSLTNNNNIMKTDIQEQDNQYFITIELPGFKKEDVKVALEEGYLVVEAKNSKKNQIKEANFIRKERFQGFLRRSFYLGDDFLLEDIKGSLEQGLLKLSVPKKEVKPKEKHYIKLN</sequence>
<dbReference type="EMBL" id="AP006628">
    <property type="protein sequence ID" value="BAD04113.1"/>
    <property type="status" value="ALT_INIT"/>
    <property type="molecule type" value="Genomic_DNA"/>
</dbReference>
<dbReference type="SMR" id="P81958"/>
<dbReference type="STRING" id="262768.PAM_028"/>
<dbReference type="KEGG" id="poy:PAM_028"/>
<dbReference type="eggNOG" id="COG0071">
    <property type="taxonomic scope" value="Bacteria"/>
</dbReference>
<dbReference type="HOGENOM" id="CLU_046737_8_0_14"/>
<dbReference type="BioCyc" id="OYEL262768:G1G26-37-MONOMER"/>
<dbReference type="Proteomes" id="UP000002523">
    <property type="component" value="Chromosome"/>
</dbReference>
<dbReference type="CDD" id="cd06471">
    <property type="entry name" value="ACD_LpsHSP_like"/>
    <property type="match status" value="1"/>
</dbReference>
<dbReference type="Gene3D" id="2.60.40.790">
    <property type="match status" value="1"/>
</dbReference>
<dbReference type="InterPro" id="IPR002068">
    <property type="entry name" value="A-crystallin/Hsp20_dom"/>
</dbReference>
<dbReference type="InterPro" id="IPR008978">
    <property type="entry name" value="HSP20-like_chaperone"/>
</dbReference>
<dbReference type="InterPro" id="IPR031107">
    <property type="entry name" value="Small_HSP"/>
</dbReference>
<dbReference type="PANTHER" id="PTHR11527">
    <property type="entry name" value="HEAT-SHOCK PROTEIN 20 FAMILY MEMBER"/>
    <property type="match status" value="1"/>
</dbReference>
<dbReference type="Pfam" id="PF00011">
    <property type="entry name" value="HSP20"/>
    <property type="match status" value="1"/>
</dbReference>
<dbReference type="SUPFAM" id="SSF49764">
    <property type="entry name" value="HSP20-like chaperones"/>
    <property type="match status" value="1"/>
</dbReference>
<dbReference type="PROSITE" id="PS01031">
    <property type="entry name" value="SHSP"/>
    <property type="match status" value="1"/>
</dbReference>
<accession>P81958</accession>
<evidence type="ECO:0000255" key="1">
    <source>
        <dbReference type="PROSITE-ProRule" id="PRU00285"/>
    </source>
</evidence>
<evidence type="ECO:0000305" key="2"/>
<comment type="function">
    <text>Probable chaperone.</text>
</comment>
<comment type="similarity">
    <text evidence="1">Belongs to the small heat shock protein (HSP20) family.</text>
</comment>
<comment type="sequence caution" evidence="2">
    <conflict type="erroneous initiation">
        <sequence resource="EMBL-CDS" id="BAD04113"/>
    </conflict>
</comment>